<accession>Q02314</accession>
<protein>
    <recommendedName>
        <fullName evidence="1">Protein P</fullName>
    </recommendedName>
    <domain>
        <recommendedName>
            <fullName evidence="1">DNA-directed DNA polymerase</fullName>
            <ecNumber evidence="1">2.7.7.7</ecNumber>
        </recommendedName>
    </domain>
    <domain>
        <recommendedName>
            <fullName evidence="1">RNA-directed DNA polymerase</fullName>
            <ecNumber evidence="1">2.7.7.49</ecNumber>
        </recommendedName>
    </domain>
    <domain>
        <recommendedName>
            <fullName evidence="1">Ribonuclease H</fullName>
            <ecNumber evidence="1">3.1.26.4</ecNumber>
        </recommendedName>
    </domain>
</protein>
<proteinExistence type="inferred from homology"/>
<evidence type="ECO:0000255" key="1">
    <source>
        <dbReference type="HAMAP-Rule" id="MF_04073"/>
    </source>
</evidence>
<evidence type="ECO:0000305" key="2"/>
<sequence length="845" mass="94895">MPLSYQHFRKLLLLDDETEAGPLEEELPRLADADLNRRVAEDLNLGNLNVSIPWTHKVGNFTGLYSSTVPIFNPEWQTPSFPKIHLHEDIANRCQQFVGPLTVNEKRRLKLIMPARFYPNSTKYLPLDKGIKTYYPDHVVNHYFQTRHYLHTLWKAGILYKRETTRSASFCGSPYSWEQELHHGRLVIKTSQRHGDEPFCSQPSGILSRSSVGPCIRSQFKQSRLGLQPHQGPLATSQPGRSGSIWARVHSPTRRCFGVEPSGSGHIGHRASDASSCLHQSAVRKAAYSHLSTSKRQSSSGHAVEFHSFPPSSARSQSQGPVFSCWWLQFRNTQPCSNYCLSHLVNLLEDWGPCTEHGEHHIRIPRTPARVTGGVFLVDKNPHNTAESRLVVDFSQFSRGSTRVSWPKFAVPNLQSLTNLLSSNLSWLSLDVSAAFYHIPLHPAAMPHLLIGSSGLSRYVARLSSNSRINNNQHGTLQNLHDSCSRQLYVSLMLLYKTYGWKLHLYSHPIILGFRKIPMGVGLSPFLLAQFTSAICSVVRRAFPHCLAFSYMDDVVLGAKSVQHLESLYTAVTNFLLSLGIHLNPNKTKRWGYSLNFMGYVIGSWGTLPQDHIVQKIKHCFRKLPVNRPIDWKVCQRLVGLLGFAAPFTQCGYPALMPLYACIQAKQAFTFSPTYKAFLSKQYMNLYPVARQRPGLCQVFADATPTGWGLAIGHQRMRETFVAPLPIHTAELLAACFARSRSGAKLIGTDNSVVLSQKYTSFPWLLGCTANWILRGTSFVYVPSALNPADDPSRGRLGLYRPLLRLPYRPTTGRTSLYAVSPSVPSHLPVRVHFASPLHVAWRPP</sequence>
<dbReference type="EC" id="2.7.7.7" evidence="1"/>
<dbReference type="EC" id="2.7.7.49" evidence="1"/>
<dbReference type="EC" id="3.1.26.4" evidence="1"/>
<dbReference type="EMBL" id="M57663">
    <property type="protein sequence ID" value="AAA69679.1"/>
    <property type="status" value="ALT_SEQ"/>
    <property type="molecule type" value="Genomic_DNA"/>
</dbReference>
<dbReference type="Proteomes" id="UP000007908">
    <property type="component" value="Genome"/>
</dbReference>
<dbReference type="GO" id="GO:0003677">
    <property type="term" value="F:DNA binding"/>
    <property type="evidence" value="ECO:0007669"/>
    <property type="project" value="UniProtKB-UniRule"/>
</dbReference>
<dbReference type="GO" id="GO:0003887">
    <property type="term" value="F:DNA-directed DNA polymerase activity"/>
    <property type="evidence" value="ECO:0007669"/>
    <property type="project" value="UniProtKB-UniRule"/>
</dbReference>
<dbReference type="GO" id="GO:0046872">
    <property type="term" value="F:metal ion binding"/>
    <property type="evidence" value="ECO:0007669"/>
    <property type="project" value="UniProtKB-UniRule"/>
</dbReference>
<dbReference type="GO" id="GO:0003964">
    <property type="term" value="F:RNA-directed DNA polymerase activity"/>
    <property type="evidence" value="ECO:0007669"/>
    <property type="project" value="UniProtKB-UniRule"/>
</dbReference>
<dbReference type="GO" id="GO:0004523">
    <property type="term" value="F:RNA-DNA hybrid ribonuclease activity"/>
    <property type="evidence" value="ECO:0007669"/>
    <property type="project" value="UniProtKB-UniRule"/>
</dbReference>
<dbReference type="GO" id="GO:0006260">
    <property type="term" value="P:DNA replication"/>
    <property type="evidence" value="ECO:0007669"/>
    <property type="project" value="UniProtKB-UniRule"/>
</dbReference>
<dbReference type="GO" id="GO:0052170">
    <property type="term" value="P:symbiont-mediated suppression of host innate immune response"/>
    <property type="evidence" value="ECO:0007669"/>
    <property type="project" value="UniProtKB-UniRule"/>
</dbReference>
<dbReference type="FunFam" id="3.30.70.270:FF:000009">
    <property type="entry name" value="Protein P"/>
    <property type="match status" value="1"/>
</dbReference>
<dbReference type="Gene3D" id="3.30.70.270">
    <property type="match status" value="1"/>
</dbReference>
<dbReference type="HAMAP" id="MF_04073">
    <property type="entry name" value="HBV_DPOL"/>
    <property type="match status" value="1"/>
</dbReference>
<dbReference type="InterPro" id="IPR043502">
    <property type="entry name" value="DNA/RNA_pol_sf"/>
</dbReference>
<dbReference type="InterPro" id="IPR001462">
    <property type="entry name" value="DNApol_viral_C"/>
</dbReference>
<dbReference type="InterPro" id="IPR000201">
    <property type="entry name" value="DNApol_viral_N"/>
</dbReference>
<dbReference type="InterPro" id="IPR037531">
    <property type="entry name" value="HBV_DPOL"/>
</dbReference>
<dbReference type="InterPro" id="IPR043128">
    <property type="entry name" value="Rev_trsase/Diguanyl_cyclase"/>
</dbReference>
<dbReference type="InterPro" id="IPR000477">
    <property type="entry name" value="RT_dom"/>
</dbReference>
<dbReference type="InterPro" id="IPR051320">
    <property type="entry name" value="Viral_Replic_Matur_Polypro"/>
</dbReference>
<dbReference type="PANTHER" id="PTHR33064:SF29">
    <property type="entry name" value="PEPTIDASE A2 DOMAIN-CONTAINING PROTEIN-RELATED"/>
    <property type="match status" value="1"/>
</dbReference>
<dbReference type="PANTHER" id="PTHR33064">
    <property type="entry name" value="POL PROTEIN"/>
    <property type="match status" value="1"/>
</dbReference>
<dbReference type="Pfam" id="PF00336">
    <property type="entry name" value="DNA_pol_viral_C"/>
    <property type="match status" value="1"/>
</dbReference>
<dbReference type="Pfam" id="PF00242">
    <property type="entry name" value="DNA_pol_viral_N"/>
    <property type="match status" value="1"/>
</dbReference>
<dbReference type="Pfam" id="PF00078">
    <property type="entry name" value="RVT_1"/>
    <property type="match status" value="1"/>
</dbReference>
<dbReference type="SUPFAM" id="SSF56672">
    <property type="entry name" value="DNA/RNA polymerases"/>
    <property type="match status" value="1"/>
</dbReference>
<dbReference type="PROSITE" id="PS50878">
    <property type="entry name" value="RT_POL"/>
    <property type="match status" value="1"/>
</dbReference>
<feature type="chain" id="PRO_0000222343" description="Protein P">
    <location>
        <begin position="1"/>
        <end position="845"/>
    </location>
</feature>
<feature type="domain" description="Reverse transcriptase" evidence="1">
    <location>
        <begin position="359"/>
        <end position="602"/>
    </location>
</feature>
<feature type="region of interest" description="Terminal protein domain (TP)" evidence="1">
    <location>
        <begin position="1"/>
        <end position="179"/>
    </location>
</feature>
<feature type="region of interest" description="Spacer" evidence="1">
    <location>
        <begin position="180"/>
        <end position="348"/>
    </location>
</feature>
<feature type="region of interest" description="Polymerase/reverse transcriptase domain (RT)" evidence="1">
    <location>
        <begin position="349"/>
        <end position="692"/>
    </location>
</feature>
<feature type="binding site" evidence="1">
    <location>
        <position position="431"/>
    </location>
    <ligand>
        <name>Mg(2+)</name>
        <dbReference type="ChEBI" id="CHEBI:18420"/>
        <note>catalytic</note>
    </ligand>
</feature>
<feature type="binding site" evidence="1">
    <location>
        <position position="553"/>
    </location>
    <ligand>
        <name>Mg(2+)</name>
        <dbReference type="ChEBI" id="CHEBI:18420"/>
        <note>catalytic</note>
    </ligand>
</feature>
<feature type="binding site" evidence="1">
    <location>
        <position position="554"/>
    </location>
    <ligand>
        <name>Mg(2+)</name>
        <dbReference type="ChEBI" id="CHEBI:18420"/>
        <note>catalytic</note>
    </ligand>
</feature>
<feature type="site" description="Priming of reverse-transcription by covalently linking the first nucleotide of the (-)DNA" evidence="1">
    <location>
        <position position="65"/>
    </location>
</feature>
<gene>
    <name evidence="1" type="primary">P</name>
</gene>
<comment type="function">
    <text evidence="1">Multifunctional enzyme that converts the viral RNA genome into dsDNA in viral cytoplasmic capsids. This enzyme displays a DNA polymerase activity that can copy either DNA or RNA templates, and a ribonuclease H (RNase H) activity that cleaves the RNA strand of RNA-DNA heteroduplexes in a partially processive 3'- to 5'-endonucleasic mode. Neo-synthesized pregenomic RNA (pgRNA) are encapsidated together with the P protein, and reverse-transcribed inside the nucleocapsid. Initiation of reverse-transcription occurs first by binding the epsilon loop on the pgRNA genome, and is initiated by protein priming, thereby the 5'-end of (-)DNA is covalently linked to P protein. Partial (+)DNA is synthesized from the (-)DNA template and generates the relaxed circular DNA (RC-DNA) genome. After budding and infection, the RC-DNA migrates in the nucleus, and is converted into a plasmid-like covalently closed circular DNA (cccDNA). The activity of P protein does not seem to be necessary for cccDNA generation, and is presumably released from (+)DNA by host nuclear DNA repair machinery.</text>
</comment>
<comment type="catalytic activity">
    <reaction evidence="1">
        <text>DNA(n) + a 2'-deoxyribonucleoside 5'-triphosphate = DNA(n+1) + diphosphate</text>
        <dbReference type="Rhea" id="RHEA:22508"/>
        <dbReference type="Rhea" id="RHEA-COMP:17339"/>
        <dbReference type="Rhea" id="RHEA-COMP:17340"/>
        <dbReference type="ChEBI" id="CHEBI:33019"/>
        <dbReference type="ChEBI" id="CHEBI:61560"/>
        <dbReference type="ChEBI" id="CHEBI:173112"/>
        <dbReference type="EC" id="2.7.7.7"/>
    </reaction>
</comment>
<comment type="catalytic activity">
    <reaction evidence="1">
        <text>DNA(n) + a 2'-deoxyribonucleoside 5'-triphosphate = DNA(n+1) + diphosphate</text>
        <dbReference type="Rhea" id="RHEA:22508"/>
        <dbReference type="Rhea" id="RHEA-COMP:17339"/>
        <dbReference type="Rhea" id="RHEA-COMP:17340"/>
        <dbReference type="ChEBI" id="CHEBI:33019"/>
        <dbReference type="ChEBI" id="CHEBI:61560"/>
        <dbReference type="ChEBI" id="CHEBI:173112"/>
        <dbReference type="EC" id="2.7.7.49"/>
    </reaction>
</comment>
<comment type="catalytic activity">
    <reaction evidence="1">
        <text>Endonucleolytic cleavage to 5'-phosphomonoester.</text>
        <dbReference type="EC" id="3.1.26.4"/>
    </reaction>
</comment>
<comment type="activity regulation">
    <text evidence="1">Activated by host HSP70 and HSP40 in vitro to be able to bind the epsilon loop of the pgRNA. Because deletion of the RNase H region renders the protein partly chaperone-independent, the chaperones may be needed indirectly to relieve occlusion of the RNA-binding site by this domain. Inhibited by several reverse-transcriptase inhibitors: Lamivudine, Adefovir and Entecavir.</text>
</comment>
<comment type="domain">
    <text evidence="1">Terminal protein domain (TP) is hepadnavirus-specific. Spacer domain is highly variable and separates the TP and RT domains. Polymerase/reverse-transcriptase domain (RT) and ribonuclease H domain (RH) are similar to retrovirus reverse transcriptase/RNase H.</text>
</comment>
<comment type="domain">
    <text evidence="1">The polymerase/reverse transcriptase (RT) and ribonuclease H (RH) domains are structured in five subdomains: finger, palm, thumb, connection and RNase H. Within the palm subdomain, the 'primer grip' region is thought to be involved in the positioning of the primer terminus for accommodating the incoming nucleotide. The RH domain stabilizes the association of RT with primer-template.</text>
</comment>
<comment type="miscellaneous">
    <text evidence="1">Hepadnaviral virions contain probably just one P protein molecule per particle.</text>
</comment>
<comment type="similarity">
    <text evidence="1">Belongs to the hepadnaviridae P protein family.</text>
</comment>
<comment type="sequence caution" evidence="2">
    <conflict type="erroneous termination">
        <sequence resource="EMBL-CDS" id="AAA69679"/>
    </conflict>
    <text>Truncated C-terminus.</text>
</comment>
<name>DPOL_HBVA5</name>
<keyword id="KW-0235">DNA replication</keyword>
<keyword id="KW-0238">DNA-binding</keyword>
<keyword id="KW-0239">DNA-directed DNA polymerase</keyword>
<keyword id="KW-0255">Endonuclease</keyword>
<keyword id="KW-0945">Host-virus interaction</keyword>
<keyword id="KW-0378">Hydrolase</keyword>
<keyword id="KW-1090">Inhibition of host innate immune response by virus</keyword>
<keyword id="KW-1113">Inhibition of host RLR pathway by virus</keyword>
<keyword id="KW-0460">Magnesium</keyword>
<keyword id="KW-0479">Metal-binding</keyword>
<keyword id="KW-0511">Multifunctional enzyme</keyword>
<keyword id="KW-0540">Nuclease</keyword>
<keyword id="KW-0548">Nucleotidyltransferase</keyword>
<keyword id="KW-0695">RNA-directed DNA polymerase</keyword>
<keyword id="KW-0808">Transferase</keyword>
<keyword id="KW-0899">Viral immunoevasion</keyword>
<organismHost>
    <name type="scientific">Homo sapiens</name>
    <name type="common">Human</name>
    <dbReference type="NCBI Taxonomy" id="9606"/>
</organismHost>
<organismHost>
    <name type="scientific">Pan troglodytes</name>
    <name type="common">Chimpanzee</name>
    <dbReference type="NCBI Taxonomy" id="9598"/>
</organismHost>
<organism>
    <name type="scientific">Hepatitis B virus genotype A1 subtype adw (isolate Philippines/pFDW294/1988)</name>
    <name type="common">HBV-A</name>
    <dbReference type="NCBI Taxonomy" id="31514"/>
    <lineage>
        <taxon>Viruses</taxon>
        <taxon>Riboviria</taxon>
        <taxon>Pararnavirae</taxon>
        <taxon>Artverviricota</taxon>
        <taxon>Revtraviricetes</taxon>
        <taxon>Blubervirales</taxon>
        <taxon>Hepadnaviridae</taxon>
        <taxon>Orthohepadnavirus</taxon>
        <taxon>Hepatitis B virus</taxon>
    </lineage>
</organism>
<reference key="1">
    <citation type="journal article" date="1988" name="J. Gastroenterol. Hepatol.">
        <title>Nucleotide sequence of a hepatitis B virus genome of subtype adw isolated from a Philippino: comparison with the reported three genomes of the same subtype.</title>
        <authorList>
            <person name="Estacio R.C."/>
            <person name="Chavez C.C."/>
            <person name="Okamoto H."/>
            <person name="Lingao A.L."/>
            <person name="Reyes M.T."/>
            <person name="Domingo E."/>
            <person name="Mayumi M."/>
        </authorList>
    </citation>
    <scope>NUCLEOTIDE SEQUENCE [GENOMIC DNA]</scope>
</reference>
<reference key="2">
    <citation type="journal article" date="2007" name="World J. Gastroenterol.">
        <title>Hepatitis B virus replication.</title>
        <authorList>
            <person name="Beck J."/>
            <person name="Nassal M."/>
        </authorList>
    </citation>
    <scope>REVIEW</scope>
</reference>